<gene>
    <name evidence="2" type="primary">secA</name>
</gene>
<comment type="function">
    <text evidence="2">Part of the Sec protein translocase complex. Interacts with the SecYEG preprotein conducting channel. Has a central role in coupling the hydrolysis of ATP to the transfer of proteins into and across the cell membrane, serving both as a receptor for the preprotein-SecB complex and as an ATP-driven molecular motor driving the stepwise translocation of polypeptide chains across the membrane.</text>
</comment>
<comment type="catalytic activity">
    <reaction evidence="2">
        <text>ATP + H2O + cellular proteinSide 1 = ADP + phosphate + cellular proteinSide 2.</text>
        <dbReference type="EC" id="7.4.2.8"/>
    </reaction>
</comment>
<comment type="cofactor">
    <cofactor evidence="2">
        <name>Zn(2+)</name>
        <dbReference type="ChEBI" id="CHEBI:29105"/>
    </cofactor>
    <text evidence="2">May bind 1 zinc ion per subunit.</text>
</comment>
<comment type="subunit">
    <text evidence="1 4">Part of the essential protein translocation apparatus which comprises SecA, SecYEG and auxiliary proteins SecDF-YajC and YidC (By similarity). Homodimer.</text>
</comment>
<comment type="subcellular location">
    <subcellularLocation>
        <location evidence="2 4">Cell inner membrane</location>
        <topology evidence="2 4">Peripheral membrane protein</topology>
        <orientation evidence="2 4">Cytoplasmic side</orientation>
    </subcellularLocation>
    <subcellularLocation>
        <location evidence="2 4">Cytoplasm</location>
    </subcellularLocation>
    <text>SecA is found predominantly with the membrane fraction.</text>
</comment>
<comment type="similarity">
    <text evidence="2">Belongs to the SecA family.</text>
</comment>
<organism>
    <name type="scientific">Rhodobacter capsulatus</name>
    <name type="common">Rhodopseudomonas capsulata</name>
    <dbReference type="NCBI Taxonomy" id="1061"/>
    <lineage>
        <taxon>Bacteria</taxon>
        <taxon>Pseudomonadati</taxon>
        <taxon>Pseudomonadota</taxon>
        <taxon>Alphaproteobacteria</taxon>
        <taxon>Rhodobacterales</taxon>
        <taxon>Rhodobacter group</taxon>
        <taxon>Rhodobacter</taxon>
    </lineage>
</organism>
<keyword id="KW-0067">ATP-binding</keyword>
<keyword id="KW-0997">Cell inner membrane</keyword>
<keyword id="KW-1003">Cell membrane</keyword>
<keyword id="KW-0963">Cytoplasm</keyword>
<keyword id="KW-0472">Membrane</keyword>
<keyword id="KW-0479">Metal-binding</keyword>
<keyword id="KW-0547">Nucleotide-binding</keyword>
<keyword id="KW-0653">Protein transport</keyword>
<keyword id="KW-1278">Translocase</keyword>
<keyword id="KW-0811">Translocation</keyword>
<keyword id="KW-0813">Transport</keyword>
<keyword id="KW-0862">Zinc</keyword>
<reference key="1">
    <citation type="journal article" date="1997" name="J. Bacteriol.">
        <title>Comparative characterization of SecA from the alpha-subclass purple bacterium Rhodobacter capsulatus and Escherichia coli reveals differences in membrane and precursor specificity.</title>
        <authorList>
            <person name="Helde R."/>
            <person name="Wiesler B."/>
            <person name="Wachter E."/>
            <person name="Neubueser A."/>
            <person name="Hoffschulte H.K."/>
            <person name="Hengelage T."/>
            <person name="Schimz K.-L."/>
            <person name="Stuart R.A."/>
            <person name="Mueller M."/>
        </authorList>
    </citation>
    <scope>NUCLEOTIDE SEQUENCE [GENOMIC DNA]</scope>
    <scope>SUBUNIT</scope>
    <scope>IN VITRO TRANSLOCATION</scope>
    <scope>SUBCELLULAR LOCATION</scope>
    <source>
        <strain>DSM 938 / 37b4</strain>
    </source>
</reference>
<accession>P52966</accession>
<evidence type="ECO:0000250" key="1"/>
<evidence type="ECO:0000255" key="2">
    <source>
        <dbReference type="HAMAP-Rule" id="MF_01382"/>
    </source>
</evidence>
<evidence type="ECO:0000256" key="3">
    <source>
        <dbReference type="SAM" id="MobiDB-lite"/>
    </source>
</evidence>
<evidence type="ECO:0000269" key="4">
    <source>
    </source>
</evidence>
<sequence length="904" mass="101099">MLGLGYIGRKLFGTPNDRKVKRTRPLVAKINALEPAFEKLSDAEIVAKTRELQARAQAGESLDALLVEAFANCREAARRALGLRAFDTQLMGGIFLHQGNIAEMKTGEGKTLVATFPAYLNALAGKGVHIVTVNDYLARRDSEWMGKVYRHLGLTCGVVYPFQPDDEKRAAYGADITYATNNELGFDYLRDNMKSSVAEMYQRDHFFAIVDEVDSILIDEARTPLIISGPSQDRSDMYRTLDAYIPFLTEEHYKLDEKQRNATFTEEGNEFLEQKLQADGLLPEGQSLYDPESTTIVHHIGQALRAHKLFFKDQNYVVTDDEIVLIDEFTGRMMKGRRLSDGLHQAIEAKERVTIQPENVTLASVTFQNYFRLYEKLAGMTGTAVTEAEEFGDIYKLGVVEVPTNRPVARKDEHDRVYRTAKEKYAAVIEAIKTAHEKGQPTLVGTTSIEKSEMLSEMLKAEGLPHNVLNARQHEQEAQIVADAGRLGAITIATNMAGRGTDIQLGGNVEMKVQEEIAANPEAAPEEIRARIEAEHAAEKQKVIEAGGLFVLATERHESRRIDNQLRGRSGRQGDPGRSLFFLSLEDDLMRIFGSDRLEGVLSKLGMKEGEAIIHPWVNKSLERAQAKVEGRNFDWRKQLLKFDDVMNDQRKAVFGQRREIMETDEISEIVADMRQQVIDDLIDDFAPPKSYVDQWDIEGMRAAFIDHAGVDLPLADWAAEEGVDQDVLRERVTAALDAVMAQKTEAFGAETMRVIEKQILLQTIDAKWREHLVTLEHLRSVVGFRGYAQRDPLSEYKTESFQLFESMLDSLRYEVTKRLGQIRPMSDEERAEMLRQQAAALAAAEGAADPAEAPAPQPAAQVALAAAPGFVESDPTTWGEPSRNDPCPCGSGEKFKHCHGRLA</sequence>
<feature type="chain" id="PRO_0000109600" description="Protein translocase subunit SecA">
    <location>
        <begin position="1"/>
        <end position="904"/>
    </location>
</feature>
<feature type="region of interest" description="Disordered" evidence="3">
    <location>
        <begin position="872"/>
        <end position="892"/>
    </location>
</feature>
<feature type="binding site" evidence="2">
    <location>
        <position position="89"/>
    </location>
    <ligand>
        <name>ATP</name>
        <dbReference type="ChEBI" id="CHEBI:30616"/>
    </ligand>
</feature>
<feature type="binding site" evidence="2">
    <location>
        <begin position="107"/>
        <end position="111"/>
    </location>
    <ligand>
        <name>ATP</name>
        <dbReference type="ChEBI" id="CHEBI:30616"/>
    </ligand>
</feature>
<feature type="binding site" evidence="2">
    <location>
        <position position="502"/>
    </location>
    <ligand>
        <name>ATP</name>
        <dbReference type="ChEBI" id="CHEBI:30616"/>
    </ligand>
</feature>
<feature type="binding site" evidence="2">
    <location>
        <position position="888"/>
    </location>
    <ligand>
        <name>Zn(2+)</name>
        <dbReference type="ChEBI" id="CHEBI:29105"/>
    </ligand>
</feature>
<feature type="binding site" evidence="2">
    <location>
        <position position="890"/>
    </location>
    <ligand>
        <name>Zn(2+)</name>
        <dbReference type="ChEBI" id="CHEBI:29105"/>
    </ligand>
</feature>
<feature type="binding site" evidence="2">
    <location>
        <position position="899"/>
    </location>
    <ligand>
        <name>Zn(2+)</name>
        <dbReference type="ChEBI" id="CHEBI:29105"/>
    </ligand>
</feature>
<feature type="binding site" evidence="2">
    <location>
        <position position="900"/>
    </location>
    <ligand>
        <name>Zn(2+)</name>
        <dbReference type="ChEBI" id="CHEBI:29105"/>
    </ligand>
</feature>
<proteinExistence type="evidence at protein level"/>
<dbReference type="EC" id="7.4.2.8" evidence="2"/>
<dbReference type="EMBL" id="X89411">
    <property type="protein sequence ID" value="CAA61591.1"/>
    <property type="molecule type" value="Genomic_DNA"/>
</dbReference>
<dbReference type="RefSeq" id="WP_074554294.1">
    <property type="nucleotide sequence ID" value="NZ_CP119563.1"/>
</dbReference>
<dbReference type="SMR" id="P52966"/>
<dbReference type="OrthoDB" id="9805579at2"/>
<dbReference type="GO" id="GO:0031522">
    <property type="term" value="C:cell envelope Sec protein transport complex"/>
    <property type="evidence" value="ECO:0007669"/>
    <property type="project" value="TreeGrafter"/>
</dbReference>
<dbReference type="GO" id="GO:0005829">
    <property type="term" value="C:cytosol"/>
    <property type="evidence" value="ECO:0007669"/>
    <property type="project" value="TreeGrafter"/>
</dbReference>
<dbReference type="GO" id="GO:0005886">
    <property type="term" value="C:plasma membrane"/>
    <property type="evidence" value="ECO:0007669"/>
    <property type="project" value="UniProtKB-SubCell"/>
</dbReference>
<dbReference type="GO" id="GO:0005524">
    <property type="term" value="F:ATP binding"/>
    <property type="evidence" value="ECO:0007669"/>
    <property type="project" value="UniProtKB-UniRule"/>
</dbReference>
<dbReference type="GO" id="GO:0046872">
    <property type="term" value="F:metal ion binding"/>
    <property type="evidence" value="ECO:0007669"/>
    <property type="project" value="UniProtKB-KW"/>
</dbReference>
<dbReference type="GO" id="GO:0008564">
    <property type="term" value="F:protein-exporting ATPase activity"/>
    <property type="evidence" value="ECO:0007669"/>
    <property type="project" value="UniProtKB-EC"/>
</dbReference>
<dbReference type="GO" id="GO:0065002">
    <property type="term" value="P:intracellular protein transmembrane transport"/>
    <property type="evidence" value="ECO:0007669"/>
    <property type="project" value="UniProtKB-UniRule"/>
</dbReference>
<dbReference type="GO" id="GO:0017038">
    <property type="term" value="P:protein import"/>
    <property type="evidence" value="ECO:0007669"/>
    <property type="project" value="InterPro"/>
</dbReference>
<dbReference type="GO" id="GO:0006605">
    <property type="term" value="P:protein targeting"/>
    <property type="evidence" value="ECO:0007669"/>
    <property type="project" value="UniProtKB-UniRule"/>
</dbReference>
<dbReference type="GO" id="GO:0043952">
    <property type="term" value="P:protein transport by the Sec complex"/>
    <property type="evidence" value="ECO:0007669"/>
    <property type="project" value="TreeGrafter"/>
</dbReference>
<dbReference type="CDD" id="cd17928">
    <property type="entry name" value="DEXDc_SecA"/>
    <property type="match status" value="1"/>
</dbReference>
<dbReference type="CDD" id="cd18803">
    <property type="entry name" value="SF2_C_secA"/>
    <property type="match status" value="1"/>
</dbReference>
<dbReference type="FunFam" id="3.40.50.300:FF:000113">
    <property type="entry name" value="Preprotein translocase subunit SecA"/>
    <property type="match status" value="1"/>
</dbReference>
<dbReference type="FunFam" id="3.90.1440.10:FF:000001">
    <property type="entry name" value="Preprotein translocase subunit SecA"/>
    <property type="match status" value="1"/>
</dbReference>
<dbReference type="FunFam" id="1.10.3060.10:FF:000003">
    <property type="entry name" value="Protein translocase subunit SecA"/>
    <property type="match status" value="1"/>
</dbReference>
<dbReference type="Gene3D" id="3.10.450.50">
    <property type="match status" value="1"/>
</dbReference>
<dbReference type="Gene3D" id="1.10.3060.10">
    <property type="entry name" value="Helical scaffold and wing domains of SecA"/>
    <property type="match status" value="1"/>
</dbReference>
<dbReference type="Gene3D" id="3.40.50.300">
    <property type="entry name" value="P-loop containing nucleotide triphosphate hydrolases"/>
    <property type="match status" value="2"/>
</dbReference>
<dbReference type="Gene3D" id="3.90.1440.10">
    <property type="entry name" value="SecA, preprotein cross-linking domain"/>
    <property type="match status" value="1"/>
</dbReference>
<dbReference type="HAMAP" id="MF_01382">
    <property type="entry name" value="SecA"/>
    <property type="match status" value="1"/>
</dbReference>
<dbReference type="InterPro" id="IPR014001">
    <property type="entry name" value="Helicase_ATP-bd"/>
</dbReference>
<dbReference type="InterPro" id="IPR001650">
    <property type="entry name" value="Helicase_C-like"/>
</dbReference>
<dbReference type="InterPro" id="IPR027417">
    <property type="entry name" value="P-loop_NTPase"/>
</dbReference>
<dbReference type="InterPro" id="IPR004027">
    <property type="entry name" value="SEC_C_motif"/>
</dbReference>
<dbReference type="InterPro" id="IPR000185">
    <property type="entry name" value="SecA"/>
</dbReference>
<dbReference type="InterPro" id="IPR020937">
    <property type="entry name" value="SecA_CS"/>
</dbReference>
<dbReference type="InterPro" id="IPR011115">
    <property type="entry name" value="SecA_DEAD"/>
</dbReference>
<dbReference type="InterPro" id="IPR014018">
    <property type="entry name" value="SecA_motor_DEAD"/>
</dbReference>
<dbReference type="InterPro" id="IPR011130">
    <property type="entry name" value="SecA_preprotein_X-link_dom"/>
</dbReference>
<dbReference type="InterPro" id="IPR044722">
    <property type="entry name" value="SecA_SF2_C"/>
</dbReference>
<dbReference type="InterPro" id="IPR011116">
    <property type="entry name" value="SecA_Wing/Scaffold"/>
</dbReference>
<dbReference type="InterPro" id="IPR036266">
    <property type="entry name" value="SecA_Wing/Scaffold_sf"/>
</dbReference>
<dbReference type="InterPro" id="IPR036670">
    <property type="entry name" value="SecA_X-link_sf"/>
</dbReference>
<dbReference type="NCBIfam" id="NF009538">
    <property type="entry name" value="PRK12904.1"/>
    <property type="match status" value="1"/>
</dbReference>
<dbReference type="NCBIfam" id="TIGR00963">
    <property type="entry name" value="secA"/>
    <property type="match status" value="1"/>
</dbReference>
<dbReference type="PANTHER" id="PTHR30612:SF0">
    <property type="entry name" value="CHLOROPLAST PROTEIN-TRANSPORTING ATPASE"/>
    <property type="match status" value="1"/>
</dbReference>
<dbReference type="PANTHER" id="PTHR30612">
    <property type="entry name" value="SECA INNER MEMBRANE COMPONENT OF SEC PROTEIN SECRETION SYSTEM"/>
    <property type="match status" value="1"/>
</dbReference>
<dbReference type="Pfam" id="PF21090">
    <property type="entry name" value="P-loop_SecA"/>
    <property type="match status" value="1"/>
</dbReference>
<dbReference type="Pfam" id="PF02810">
    <property type="entry name" value="SEC-C"/>
    <property type="match status" value="1"/>
</dbReference>
<dbReference type="Pfam" id="PF07517">
    <property type="entry name" value="SecA_DEAD"/>
    <property type="match status" value="1"/>
</dbReference>
<dbReference type="Pfam" id="PF01043">
    <property type="entry name" value="SecA_PP_bind"/>
    <property type="match status" value="1"/>
</dbReference>
<dbReference type="Pfam" id="PF07516">
    <property type="entry name" value="SecA_SW"/>
    <property type="match status" value="1"/>
</dbReference>
<dbReference type="PRINTS" id="PR00906">
    <property type="entry name" value="SECA"/>
</dbReference>
<dbReference type="SMART" id="SM00957">
    <property type="entry name" value="SecA_DEAD"/>
    <property type="match status" value="1"/>
</dbReference>
<dbReference type="SMART" id="SM00958">
    <property type="entry name" value="SecA_PP_bind"/>
    <property type="match status" value="1"/>
</dbReference>
<dbReference type="SUPFAM" id="SSF81886">
    <property type="entry name" value="Helical scaffold and wing domains of SecA"/>
    <property type="match status" value="1"/>
</dbReference>
<dbReference type="SUPFAM" id="SSF52540">
    <property type="entry name" value="P-loop containing nucleoside triphosphate hydrolases"/>
    <property type="match status" value="2"/>
</dbReference>
<dbReference type="SUPFAM" id="SSF81767">
    <property type="entry name" value="Pre-protein crosslinking domain of SecA"/>
    <property type="match status" value="1"/>
</dbReference>
<dbReference type="PROSITE" id="PS01312">
    <property type="entry name" value="SECA"/>
    <property type="match status" value="1"/>
</dbReference>
<dbReference type="PROSITE" id="PS51196">
    <property type="entry name" value="SECA_MOTOR_DEAD"/>
    <property type="match status" value="1"/>
</dbReference>
<name>SECA_RHOCA</name>
<protein>
    <recommendedName>
        <fullName evidence="2">Protein translocase subunit SecA</fullName>
        <ecNumber evidence="2">7.4.2.8</ecNumber>
    </recommendedName>
</protein>